<accession>A5IUY3</accession>
<dbReference type="EC" id="5.3.1.26" evidence="1"/>
<dbReference type="EMBL" id="CP000703">
    <property type="protein sequence ID" value="ABQ50006.1"/>
    <property type="molecule type" value="Genomic_DNA"/>
</dbReference>
<dbReference type="RefSeq" id="WP_000684743.1">
    <property type="nucleotide sequence ID" value="NC_009487.1"/>
</dbReference>
<dbReference type="SMR" id="A5IUY3"/>
<dbReference type="KEGG" id="saj:SaurJH9_2225"/>
<dbReference type="HOGENOM" id="CLU_091396_2_0_9"/>
<dbReference type="UniPathway" id="UPA00702">
    <property type="reaction ID" value="UER00714"/>
</dbReference>
<dbReference type="GO" id="GO:0050044">
    <property type="term" value="F:galactose-6-phosphate isomerase activity"/>
    <property type="evidence" value="ECO:0007669"/>
    <property type="project" value="UniProtKB-UniRule"/>
</dbReference>
<dbReference type="GO" id="GO:0004751">
    <property type="term" value="F:ribose-5-phosphate isomerase activity"/>
    <property type="evidence" value="ECO:0007669"/>
    <property type="project" value="TreeGrafter"/>
</dbReference>
<dbReference type="GO" id="GO:0019316">
    <property type="term" value="P:D-allose catabolic process"/>
    <property type="evidence" value="ECO:0007669"/>
    <property type="project" value="TreeGrafter"/>
</dbReference>
<dbReference type="GO" id="GO:0019388">
    <property type="term" value="P:galactose catabolic process"/>
    <property type="evidence" value="ECO:0007669"/>
    <property type="project" value="UniProtKB-UniPathway"/>
</dbReference>
<dbReference type="GO" id="GO:0019512">
    <property type="term" value="P:lactose catabolic process via tagatose-6-phosphate"/>
    <property type="evidence" value="ECO:0007669"/>
    <property type="project" value="UniProtKB-UniRule"/>
</dbReference>
<dbReference type="GO" id="GO:0009052">
    <property type="term" value="P:pentose-phosphate shunt, non-oxidative branch"/>
    <property type="evidence" value="ECO:0007669"/>
    <property type="project" value="TreeGrafter"/>
</dbReference>
<dbReference type="Gene3D" id="3.40.1400.10">
    <property type="entry name" value="Sugar-phosphate isomerase, RpiB/LacA/LacB"/>
    <property type="match status" value="1"/>
</dbReference>
<dbReference type="HAMAP" id="MF_01556">
    <property type="entry name" value="LacB"/>
    <property type="match status" value="1"/>
</dbReference>
<dbReference type="InterPro" id="IPR004784">
    <property type="entry name" value="LacB"/>
</dbReference>
<dbReference type="InterPro" id="IPR003500">
    <property type="entry name" value="RpiB_LacA_LacB"/>
</dbReference>
<dbReference type="InterPro" id="IPR036569">
    <property type="entry name" value="RpiB_LacA_LacB_sf"/>
</dbReference>
<dbReference type="NCBIfam" id="TIGR01119">
    <property type="entry name" value="lacB"/>
    <property type="match status" value="1"/>
</dbReference>
<dbReference type="NCBIfam" id="NF004051">
    <property type="entry name" value="PRK05571.1"/>
    <property type="match status" value="1"/>
</dbReference>
<dbReference type="NCBIfam" id="NF006381">
    <property type="entry name" value="PRK08622.1"/>
    <property type="match status" value="1"/>
</dbReference>
<dbReference type="NCBIfam" id="NF009258">
    <property type="entry name" value="PRK12615.1"/>
    <property type="match status" value="1"/>
</dbReference>
<dbReference type="NCBIfam" id="TIGR00689">
    <property type="entry name" value="rpiB_lacA_lacB"/>
    <property type="match status" value="1"/>
</dbReference>
<dbReference type="PANTHER" id="PTHR30345:SF0">
    <property type="entry name" value="DNA DAMAGE-REPAIR_TOLERATION PROTEIN DRT102"/>
    <property type="match status" value="1"/>
</dbReference>
<dbReference type="PANTHER" id="PTHR30345">
    <property type="entry name" value="RIBOSE-5-PHOSPHATE ISOMERASE B"/>
    <property type="match status" value="1"/>
</dbReference>
<dbReference type="Pfam" id="PF02502">
    <property type="entry name" value="LacAB_rpiB"/>
    <property type="match status" value="1"/>
</dbReference>
<dbReference type="PIRSF" id="PIRSF005384">
    <property type="entry name" value="RpiB_LacA_B"/>
    <property type="match status" value="1"/>
</dbReference>
<dbReference type="SUPFAM" id="SSF89623">
    <property type="entry name" value="Ribose/Galactose isomerase RpiB/AlsB"/>
    <property type="match status" value="1"/>
</dbReference>
<evidence type="ECO:0000255" key="1">
    <source>
        <dbReference type="HAMAP-Rule" id="MF_01556"/>
    </source>
</evidence>
<proteinExistence type="inferred from homology"/>
<sequence length="171" mass="18925">MKIALGCDHIVTDTKMRVSEFLKSKGHEVIDVGTYDFTRTHYPIFGKKVGEQVVSGNADLGVCICGTGVGINNAVNKVPGVRSALVRDMTSALYAKEELNANVIGFGGRIIGELLMCDIIDAFINAEYKATEENKKLIAKIKHLETSNADQADPHFFDEFLEKWDRGEYHD</sequence>
<gene>
    <name evidence="1" type="primary">lacB</name>
    <name type="ordered locus">SaurJH9_2225</name>
</gene>
<keyword id="KW-0413">Isomerase</keyword>
<keyword id="KW-0423">Lactose metabolism</keyword>
<feature type="chain" id="PRO_1000087788" description="Galactose-6-phosphate isomerase subunit LacB">
    <location>
        <begin position="1"/>
        <end position="171"/>
    </location>
</feature>
<protein>
    <recommendedName>
        <fullName evidence="1">Galactose-6-phosphate isomerase subunit LacB</fullName>
        <ecNumber evidence="1">5.3.1.26</ecNumber>
    </recommendedName>
</protein>
<name>LACB_STAA9</name>
<organism>
    <name type="scientific">Staphylococcus aureus (strain JH9)</name>
    <dbReference type="NCBI Taxonomy" id="359786"/>
    <lineage>
        <taxon>Bacteria</taxon>
        <taxon>Bacillati</taxon>
        <taxon>Bacillota</taxon>
        <taxon>Bacilli</taxon>
        <taxon>Bacillales</taxon>
        <taxon>Staphylococcaceae</taxon>
        <taxon>Staphylococcus</taxon>
    </lineage>
</organism>
<reference key="1">
    <citation type="submission" date="2007-05" db="EMBL/GenBank/DDBJ databases">
        <title>Complete sequence of chromosome of Staphylococcus aureus subsp. aureus JH9.</title>
        <authorList>
            <consortium name="US DOE Joint Genome Institute"/>
            <person name="Copeland A."/>
            <person name="Lucas S."/>
            <person name="Lapidus A."/>
            <person name="Barry K."/>
            <person name="Detter J.C."/>
            <person name="Glavina del Rio T."/>
            <person name="Hammon N."/>
            <person name="Israni S."/>
            <person name="Pitluck S."/>
            <person name="Chain P."/>
            <person name="Malfatti S."/>
            <person name="Shin M."/>
            <person name="Vergez L."/>
            <person name="Schmutz J."/>
            <person name="Larimer F."/>
            <person name="Land M."/>
            <person name="Hauser L."/>
            <person name="Kyrpides N."/>
            <person name="Kim E."/>
            <person name="Tomasz A."/>
            <person name="Richardson P."/>
        </authorList>
    </citation>
    <scope>NUCLEOTIDE SEQUENCE [LARGE SCALE GENOMIC DNA]</scope>
    <source>
        <strain>JH9</strain>
    </source>
</reference>
<comment type="catalytic activity">
    <reaction evidence="1">
        <text>aldehydo-D-galactose 6-phosphate = keto-D-tagatose 6-phosphate</text>
        <dbReference type="Rhea" id="RHEA:13033"/>
        <dbReference type="ChEBI" id="CHEBI:58255"/>
        <dbReference type="ChEBI" id="CHEBI:134283"/>
        <dbReference type="EC" id="5.3.1.26"/>
    </reaction>
</comment>
<comment type="pathway">
    <text evidence="1">Carbohydrate metabolism; D-galactose 6-phosphate degradation; D-tagatose 6-phosphate from D-galactose 6-phosphate: step 1/1.</text>
</comment>
<comment type="subunit">
    <text evidence="1">Heteromultimeric protein consisting of LacA and LacB.</text>
</comment>
<comment type="similarity">
    <text evidence="1">Belongs to the LacAB/RpiB family.</text>
</comment>